<feature type="chain" id="PRO_0000253912" description="Protein POF1B">
    <location>
        <begin position="1"/>
        <end position="587"/>
    </location>
</feature>
<feature type="coiled-coil region" evidence="2">
    <location>
        <begin position="331"/>
        <end position="529"/>
    </location>
</feature>
<feature type="sequence conflict" description="In Ref. 4; BAC39681." evidence="4" ref="4">
    <original>S</original>
    <variation>N</variation>
    <location>
        <position position="91"/>
    </location>
</feature>
<comment type="function">
    <text evidence="1">Plays a key role in the organization of epithelial monolayers by regulating the actin cytoskeleton. May be involved in ovary development (By similarity).</text>
</comment>
<comment type="subunit">
    <text evidence="1">Interacts with nonmuscle actin.</text>
</comment>
<comment type="subcellular location">
    <subcellularLocation>
        <location evidence="1">Cell junction</location>
        <location evidence="1">Tight junction</location>
    </subcellularLocation>
</comment>
<comment type="tissue specificity">
    <text evidence="3">Expression absent in adult ovary.</text>
</comment>
<comment type="developmental stage">
    <text evidence="3">Expressed in ovary between 16.5 dpc and P5.</text>
</comment>
<comment type="caution">
    <text evidence="4">It is uncertain whether Met-1 or Met-2 is the initiator. The first methionine is not conserved among other organisms, but rat. It could be rodent-specific.</text>
</comment>
<reference key="1">
    <citation type="journal article" date="2004" name="Hum. Reprod.">
        <title>Mutation analysis of two candidate genes for premature ovarian failure, DACH2 and POF1B.</title>
        <authorList>
            <person name="Bione S."/>
            <person name="Rizzolio F."/>
            <person name="Sala C."/>
            <person name="Ricotti R."/>
            <person name="Goegan M."/>
            <person name="Manzini M.C."/>
            <person name="Battaglia R."/>
            <person name="Marozzi A."/>
            <person name="Vegetti W."/>
            <person name="Dalpra L."/>
            <person name="Crosignani P.G."/>
            <person name="Ginelli E."/>
            <person name="Nappi R."/>
            <person name="Bernabini S."/>
            <person name="Bruni V."/>
            <person name="Torricelli F."/>
            <person name="Zuffardi O."/>
            <person name="Toniolo D."/>
        </authorList>
    </citation>
    <scope>NUCLEOTIDE SEQUENCE [MRNA]</scope>
    <scope>TISSUE SPECIFICITY</scope>
    <scope>DEVELOPMENTAL STAGE</scope>
    <source>
        <strain>C57BL/6J</strain>
        <strain>Swiss Webster / NIH</strain>
    </source>
</reference>
<reference key="2">
    <citation type="journal article" date="2009" name="PLoS Biol.">
        <title>Lineage-specific biology revealed by a finished genome assembly of the mouse.</title>
        <authorList>
            <person name="Church D.M."/>
            <person name="Goodstadt L."/>
            <person name="Hillier L.W."/>
            <person name="Zody M.C."/>
            <person name="Goldstein S."/>
            <person name="She X."/>
            <person name="Bult C.J."/>
            <person name="Agarwala R."/>
            <person name="Cherry J.L."/>
            <person name="DiCuccio M."/>
            <person name="Hlavina W."/>
            <person name="Kapustin Y."/>
            <person name="Meric P."/>
            <person name="Maglott D."/>
            <person name="Birtle Z."/>
            <person name="Marques A.C."/>
            <person name="Graves T."/>
            <person name="Zhou S."/>
            <person name="Teague B."/>
            <person name="Potamousis K."/>
            <person name="Churas C."/>
            <person name="Place M."/>
            <person name="Herschleb J."/>
            <person name="Runnheim R."/>
            <person name="Forrest D."/>
            <person name="Amos-Landgraf J."/>
            <person name="Schwartz D.C."/>
            <person name="Cheng Z."/>
            <person name="Lindblad-Toh K."/>
            <person name="Eichler E.E."/>
            <person name="Ponting C.P."/>
        </authorList>
    </citation>
    <scope>NUCLEOTIDE SEQUENCE [LARGE SCALE GENOMIC DNA]</scope>
    <source>
        <strain>C57BL/6J</strain>
    </source>
</reference>
<reference key="3">
    <citation type="submission" date="2005-09" db="EMBL/GenBank/DDBJ databases">
        <authorList>
            <person name="Mural R.J."/>
            <person name="Adams M.D."/>
            <person name="Myers E.W."/>
            <person name="Smith H.O."/>
            <person name="Venter J.C."/>
        </authorList>
    </citation>
    <scope>NUCLEOTIDE SEQUENCE [LARGE SCALE GENOMIC DNA]</scope>
</reference>
<reference key="4">
    <citation type="journal article" date="2005" name="Science">
        <title>The transcriptional landscape of the mammalian genome.</title>
        <authorList>
            <person name="Carninci P."/>
            <person name="Kasukawa T."/>
            <person name="Katayama S."/>
            <person name="Gough J."/>
            <person name="Frith M.C."/>
            <person name="Maeda N."/>
            <person name="Oyama R."/>
            <person name="Ravasi T."/>
            <person name="Lenhard B."/>
            <person name="Wells C."/>
            <person name="Kodzius R."/>
            <person name="Shimokawa K."/>
            <person name="Bajic V.B."/>
            <person name="Brenner S.E."/>
            <person name="Batalov S."/>
            <person name="Forrest A.R."/>
            <person name="Zavolan M."/>
            <person name="Davis M.J."/>
            <person name="Wilming L.G."/>
            <person name="Aidinis V."/>
            <person name="Allen J.E."/>
            <person name="Ambesi-Impiombato A."/>
            <person name="Apweiler R."/>
            <person name="Aturaliya R.N."/>
            <person name="Bailey T.L."/>
            <person name="Bansal M."/>
            <person name="Baxter L."/>
            <person name="Beisel K.W."/>
            <person name="Bersano T."/>
            <person name="Bono H."/>
            <person name="Chalk A.M."/>
            <person name="Chiu K.P."/>
            <person name="Choudhary V."/>
            <person name="Christoffels A."/>
            <person name="Clutterbuck D.R."/>
            <person name="Crowe M.L."/>
            <person name="Dalla E."/>
            <person name="Dalrymple B.P."/>
            <person name="de Bono B."/>
            <person name="Della Gatta G."/>
            <person name="di Bernardo D."/>
            <person name="Down T."/>
            <person name="Engstrom P."/>
            <person name="Fagiolini M."/>
            <person name="Faulkner G."/>
            <person name="Fletcher C.F."/>
            <person name="Fukushima T."/>
            <person name="Furuno M."/>
            <person name="Futaki S."/>
            <person name="Gariboldi M."/>
            <person name="Georgii-Hemming P."/>
            <person name="Gingeras T.R."/>
            <person name="Gojobori T."/>
            <person name="Green R.E."/>
            <person name="Gustincich S."/>
            <person name="Harbers M."/>
            <person name="Hayashi Y."/>
            <person name="Hensch T.K."/>
            <person name="Hirokawa N."/>
            <person name="Hill D."/>
            <person name="Huminiecki L."/>
            <person name="Iacono M."/>
            <person name="Ikeo K."/>
            <person name="Iwama A."/>
            <person name="Ishikawa T."/>
            <person name="Jakt M."/>
            <person name="Kanapin A."/>
            <person name="Katoh M."/>
            <person name="Kawasawa Y."/>
            <person name="Kelso J."/>
            <person name="Kitamura H."/>
            <person name="Kitano H."/>
            <person name="Kollias G."/>
            <person name="Krishnan S.P."/>
            <person name="Kruger A."/>
            <person name="Kummerfeld S.K."/>
            <person name="Kurochkin I.V."/>
            <person name="Lareau L.F."/>
            <person name="Lazarevic D."/>
            <person name="Lipovich L."/>
            <person name="Liu J."/>
            <person name="Liuni S."/>
            <person name="McWilliam S."/>
            <person name="Madan Babu M."/>
            <person name="Madera M."/>
            <person name="Marchionni L."/>
            <person name="Matsuda H."/>
            <person name="Matsuzawa S."/>
            <person name="Miki H."/>
            <person name="Mignone F."/>
            <person name="Miyake S."/>
            <person name="Morris K."/>
            <person name="Mottagui-Tabar S."/>
            <person name="Mulder N."/>
            <person name="Nakano N."/>
            <person name="Nakauchi H."/>
            <person name="Ng P."/>
            <person name="Nilsson R."/>
            <person name="Nishiguchi S."/>
            <person name="Nishikawa S."/>
            <person name="Nori F."/>
            <person name="Ohara O."/>
            <person name="Okazaki Y."/>
            <person name="Orlando V."/>
            <person name="Pang K.C."/>
            <person name="Pavan W.J."/>
            <person name="Pavesi G."/>
            <person name="Pesole G."/>
            <person name="Petrovsky N."/>
            <person name="Piazza S."/>
            <person name="Reed J."/>
            <person name="Reid J.F."/>
            <person name="Ring B.Z."/>
            <person name="Ringwald M."/>
            <person name="Rost B."/>
            <person name="Ruan Y."/>
            <person name="Salzberg S.L."/>
            <person name="Sandelin A."/>
            <person name="Schneider C."/>
            <person name="Schoenbach C."/>
            <person name="Sekiguchi K."/>
            <person name="Semple C.A."/>
            <person name="Seno S."/>
            <person name="Sessa L."/>
            <person name="Sheng Y."/>
            <person name="Shibata Y."/>
            <person name="Shimada H."/>
            <person name="Shimada K."/>
            <person name="Silva D."/>
            <person name="Sinclair B."/>
            <person name="Sperling S."/>
            <person name="Stupka E."/>
            <person name="Sugiura K."/>
            <person name="Sultana R."/>
            <person name="Takenaka Y."/>
            <person name="Taki K."/>
            <person name="Tammoja K."/>
            <person name="Tan S.L."/>
            <person name="Tang S."/>
            <person name="Taylor M.S."/>
            <person name="Tegner J."/>
            <person name="Teichmann S.A."/>
            <person name="Ueda H.R."/>
            <person name="van Nimwegen E."/>
            <person name="Verardo R."/>
            <person name="Wei C.L."/>
            <person name="Yagi K."/>
            <person name="Yamanishi H."/>
            <person name="Zabarovsky E."/>
            <person name="Zhu S."/>
            <person name="Zimmer A."/>
            <person name="Hide W."/>
            <person name="Bult C."/>
            <person name="Grimmond S.M."/>
            <person name="Teasdale R.D."/>
            <person name="Liu E.T."/>
            <person name="Brusic V."/>
            <person name="Quackenbush J."/>
            <person name="Wahlestedt C."/>
            <person name="Mattick J.S."/>
            <person name="Hume D.A."/>
            <person name="Kai C."/>
            <person name="Sasaki D."/>
            <person name="Tomaru Y."/>
            <person name="Fukuda S."/>
            <person name="Kanamori-Katayama M."/>
            <person name="Suzuki M."/>
            <person name="Aoki J."/>
            <person name="Arakawa T."/>
            <person name="Iida J."/>
            <person name="Imamura K."/>
            <person name="Itoh M."/>
            <person name="Kato T."/>
            <person name="Kawaji H."/>
            <person name="Kawagashira N."/>
            <person name="Kawashima T."/>
            <person name="Kojima M."/>
            <person name="Kondo S."/>
            <person name="Konno H."/>
            <person name="Nakano K."/>
            <person name="Ninomiya N."/>
            <person name="Nishio T."/>
            <person name="Okada M."/>
            <person name="Plessy C."/>
            <person name="Shibata K."/>
            <person name="Shiraki T."/>
            <person name="Suzuki S."/>
            <person name="Tagami M."/>
            <person name="Waki K."/>
            <person name="Watahiki A."/>
            <person name="Okamura-Oho Y."/>
            <person name="Suzuki H."/>
            <person name="Kawai J."/>
            <person name="Hayashizaki Y."/>
        </authorList>
    </citation>
    <scope>NUCLEOTIDE SEQUENCE [LARGE SCALE MRNA] OF 1-428</scope>
    <source>
        <strain>C57BL/6J</strain>
        <tissue>Head</tissue>
    </source>
</reference>
<protein>
    <recommendedName>
        <fullName>Protein POF1B</fullName>
    </recommendedName>
</protein>
<keyword id="KW-0009">Actin-binding</keyword>
<keyword id="KW-0965">Cell junction</keyword>
<keyword id="KW-0175">Coiled coil</keyword>
<keyword id="KW-1185">Reference proteome</keyword>
<keyword id="KW-0796">Tight junction</keyword>
<evidence type="ECO:0000250" key="1"/>
<evidence type="ECO:0000255" key="2"/>
<evidence type="ECO:0000269" key="3">
    <source>
    </source>
</evidence>
<evidence type="ECO:0000305" key="4"/>
<organism>
    <name type="scientific">Mus musculus</name>
    <name type="common">Mouse</name>
    <dbReference type="NCBI Taxonomy" id="10090"/>
    <lineage>
        <taxon>Eukaryota</taxon>
        <taxon>Metazoa</taxon>
        <taxon>Chordata</taxon>
        <taxon>Craniata</taxon>
        <taxon>Vertebrata</taxon>
        <taxon>Euteleostomi</taxon>
        <taxon>Mammalia</taxon>
        <taxon>Eutheria</taxon>
        <taxon>Euarchontoglires</taxon>
        <taxon>Glires</taxon>
        <taxon>Rodentia</taxon>
        <taxon>Myomorpha</taxon>
        <taxon>Muroidea</taxon>
        <taxon>Muridae</taxon>
        <taxon>Murinae</taxon>
        <taxon>Mus</taxon>
        <taxon>Mus</taxon>
    </lineage>
</organism>
<accession>Q8K4L4</accession>
<accession>A2ANY1</accession>
<accession>Q8C3A2</accession>
<accession>Q8R4R8</accession>
<proteinExistence type="evidence at transcript level"/>
<sequence>MMSSSYWSETSSSSCGTQQPTEVLQCQPQHYHYYHQPSQAQQPPEKNVVYERVRTYSGPMNKVVQALDPLGSREVLSPLKPASSYQSLVWSDHSQELYSPTLKISTCAPSTLHITQNAEQELHSPTVKVTTYPQTTIRRYIVQNPEQEPLSPFLRGSQFFPGNNVIYEKTIRKVEKLNTDQECCPQIQCHHHVIQQPQIIHSPHCQQSHSSHQIQCITENDSNIGHELCHGGPSQIHEQVIIQDDGPEKLDPKYFGELLADLSRKNTDLYHCLLEHLERIGGSKQDFESTDTSEDIESLIPKGLSEFTKQQIRYILQMRGMSDKSLRLVLSTFSNIREELGHLQNDLTSLENDKIRLEKDLAFKENQMKEYEELLASVRANNRQQQQGLQDSSAKCQSLEENNLSLRHTLSDLEYRLKELEYCKRNLEQENKNLRIQVSETCTGPTLQAKMDEIGNHYMEMVKNLRLDKDREISKLRSQLNQYQKDVSKREGSCSDFQFKLHELTSLLEEKDSLIKRQSEELSKLRQEIYSSHNQPSCGGRTTITTKKYRTQYPILGLLYDDYEYIPPGSDTQTIVIEKTEDKWTCP</sequence>
<gene>
    <name type="primary">Pof1b</name>
</gene>
<dbReference type="EMBL" id="AF309775">
    <property type="protein sequence ID" value="AAM93271.1"/>
    <property type="molecule type" value="mRNA"/>
</dbReference>
<dbReference type="EMBL" id="AF408412">
    <property type="protein sequence ID" value="AAM00425.1"/>
    <property type="molecule type" value="mRNA"/>
</dbReference>
<dbReference type="EMBL" id="AL831771">
    <property type="status" value="NOT_ANNOTATED_CDS"/>
    <property type="molecule type" value="Genomic_DNA"/>
</dbReference>
<dbReference type="EMBL" id="CH466564">
    <property type="protein sequence ID" value="EDL14003.1"/>
    <property type="molecule type" value="Genomic_DNA"/>
</dbReference>
<dbReference type="EMBL" id="AK086511">
    <property type="protein sequence ID" value="BAC39681.1"/>
    <property type="molecule type" value="mRNA"/>
</dbReference>
<dbReference type="CCDS" id="CCDS30362.1"/>
<dbReference type="RefSeq" id="NP_853557.1">
    <property type="nucleotide sequence ID" value="NM_181579.1"/>
</dbReference>
<dbReference type="SMR" id="Q8K4L4"/>
<dbReference type="BioGRID" id="213618">
    <property type="interactions" value="3"/>
</dbReference>
<dbReference type="FunCoup" id="Q8K4L4">
    <property type="interactions" value="50"/>
</dbReference>
<dbReference type="STRING" id="10090.ENSMUSP00000047655"/>
<dbReference type="iPTMnet" id="Q8K4L4"/>
<dbReference type="PhosphoSitePlus" id="Q8K4L4"/>
<dbReference type="PaxDb" id="10090-ENSMUSP00000047655"/>
<dbReference type="PeptideAtlas" id="Q8K4L4"/>
<dbReference type="ProteomicsDB" id="289778"/>
<dbReference type="Pumba" id="Q8K4L4"/>
<dbReference type="Antibodypedia" id="453">
    <property type="antibodies" value="99 antibodies from 22 providers"/>
</dbReference>
<dbReference type="DNASU" id="69693"/>
<dbReference type="Ensembl" id="ENSMUST00000039887.4">
    <property type="protein sequence ID" value="ENSMUSP00000047655.4"/>
    <property type="gene ID" value="ENSMUSG00000034607.7"/>
</dbReference>
<dbReference type="GeneID" id="69693"/>
<dbReference type="KEGG" id="mmu:69693"/>
<dbReference type="UCSC" id="uc009udm.1">
    <property type="organism name" value="mouse"/>
</dbReference>
<dbReference type="AGR" id="MGI:1916943"/>
<dbReference type="CTD" id="79983"/>
<dbReference type="MGI" id="MGI:1916943">
    <property type="gene designation" value="Pof1b"/>
</dbReference>
<dbReference type="VEuPathDB" id="HostDB:ENSMUSG00000034607"/>
<dbReference type="eggNOG" id="ENOG502QRUE">
    <property type="taxonomic scope" value="Eukaryota"/>
</dbReference>
<dbReference type="GeneTree" id="ENSGT00390000000141"/>
<dbReference type="HOGENOM" id="CLU_031293_0_0_1"/>
<dbReference type="InParanoid" id="Q8K4L4"/>
<dbReference type="OMA" id="HHYYRRQ"/>
<dbReference type="OrthoDB" id="9830956at2759"/>
<dbReference type="TreeFam" id="TF331412"/>
<dbReference type="BioGRID-ORCS" id="69693">
    <property type="hits" value="1 hit in 76 CRISPR screens"/>
</dbReference>
<dbReference type="PRO" id="PR:Q8K4L4"/>
<dbReference type="Proteomes" id="UP000000589">
    <property type="component" value="Chromosome X"/>
</dbReference>
<dbReference type="RNAct" id="Q8K4L4">
    <property type="molecule type" value="protein"/>
</dbReference>
<dbReference type="Bgee" id="ENSMUSG00000034607">
    <property type="expression patterns" value="Expressed in tail skin and 95 other cell types or tissues"/>
</dbReference>
<dbReference type="GO" id="GO:0005884">
    <property type="term" value="C:actin filament"/>
    <property type="evidence" value="ECO:0007669"/>
    <property type="project" value="Ensembl"/>
</dbReference>
<dbReference type="GO" id="GO:0005912">
    <property type="term" value="C:adherens junction"/>
    <property type="evidence" value="ECO:0007669"/>
    <property type="project" value="Ensembl"/>
</dbReference>
<dbReference type="GO" id="GO:0005923">
    <property type="term" value="C:bicellular tight junction"/>
    <property type="evidence" value="ECO:0007669"/>
    <property type="project" value="UniProtKB-SubCell"/>
</dbReference>
<dbReference type="GO" id="GO:0030057">
    <property type="term" value="C:desmosome"/>
    <property type="evidence" value="ECO:0007669"/>
    <property type="project" value="Ensembl"/>
</dbReference>
<dbReference type="GO" id="GO:0051015">
    <property type="term" value="F:actin filament binding"/>
    <property type="evidence" value="ECO:0007669"/>
    <property type="project" value="Ensembl"/>
</dbReference>
<dbReference type="GO" id="GO:0007015">
    <property type="term" value="P:actin filament organization"/>
    <property type="evidence" value="ECO:0007669"/>
    <property type="project" value="Ensembl"/>
</dbReference>
<dbReference type="GO" id="GO:0070830">
    <property type="term" value="P:bicellular tight junction assembly"/>
    <property type="evidence" value="ECO:0007669"/>
    <property type="project" value="Ensembl"/>
</dbReference>
<dbReference type="GO" id="GO:0003382">
    <property type="term" value="P:epithelial cell morphogenesis"/>
    <property type="evidence" value="ECO:0007669"/>
    <property type="project" value="Ensembl"/>
</dbReference>
<dbReference type="InterPro" id="IPR026186">
    <property type="entry name" value="POF1B"/>
</dbReference>
<dbReference type="InterPro" id="IPR056240">
    <property type="entry name" value="POF1B_HlH"/>
</dbReference>
<dbReference type="PANTHER" id="PTHR22546">
    <property type="entry name" value="PREMATURE OVARIAN FAILURE, 1B"/>
    <property type="match status" value="1"/>
</dbReference>
<dbReference type="PANTHER" id="PTHR22546:SF0">
    <property type="entry name" value="PROTEIN POF1B"/>
    <property type="match status" value="1"/>
</dbReference>
<dbReference type="Pfam" id="PF24617">
    <property type="entry name" value="POF1B_HlH"/>
    <property type="match status" value="1"/>
</dbReference>
<name>POF1B_MOUSE</name>